<comment type="function">
    <text evidence="1">Involved in chemotaxis. Part of a chemotaxis signal transduction system that modulates chemotaxis in response to various stimuli. Catalyzes the demethylation of specific methylglutamate residues introduced into the chemoreceptors (methyl-accepting chemotaxis proteins or MCP) by CheR. Also mediates the irreversible deamidation of specific glutamine residues to glutamic acid.</text>
</comment>
<comment type="catalytic activity">
    <reaction evidence="1">
        <text>[protein]-L-glutamate 5-O-methyl ester + H2O = L-glutamyl-[protein] + methanol + H(+)</text>
        <dbReference type="Rhea" id="RHEA:23236"/>
        <dbReference type="Rhea" id="RHEA-COMP:10208"/>
        <dbReference type="Rhea" id="RHEA-COMP:10311"/>
        <dbReference type="ChEBI" id="CHEBI:15377"/>
        <dbReference type="ChEBI" id="CHEBI:15378"/>
        <dbReference type="ChEBI" id="CHEBI:17790"/>
        <dbReference type="ChEBI" id="CHEBI:29973"/>
        <dbReference type="ChEBI" id="CHEBI:82795"/>
        <dbReference type="EC" id="3.1.1.61"/>
    </reaction>
</comment>
<comment type="catalytic activity">
    <reaction evidence="1">
        <text>L-glutaminyl-[protein] + H2O = L-glutamyl-[protein] + NH4(+)</text>
        <dbReference type="Rhea" id="RHEA:16441"/>
        <dbReference type="Rhea" id="RHEA-COMP:10207"/>
        <dbReference type="Rhea" id="RHEA-COMP:10208"/>
        <dbReference type="ChEBI" id="CHEBI:15377"/>
        <dbReference type="ChEBI" id="CHEBI:28938"/>
        <dbReference type="ChEBI" id="CHEBI:29973"/>
        <dbReference type="ChEBI" id="CHEBI:30011"/>
        <dbReference type="EC" id="3.5.1.44"/>
    </reaction>
</comment>
<comment type="subcellular location">
    <subcellularLocation>
        <location evidence="1">Cytoplasm</location>
    </subcellularLocation>
</comment>
<comment type="domain">
    <text evidence="1">Contains a C-terminal catalytic domain, and an N-terminal region which modulates catalytic activity.</text>
</comment>
<comment type="PTM">
    <text evidence="1">Phosphorylated by CheA. Phosphorylation of the N-terminal regulatory domain activates the methylesterase activity.</text>
</comment>
<comment type="similarity">
    <text evidence="1">Belongs to the CheB family.</text>
</comment>
<reference key="1">
    <citation type="journal article" date="2010" name="PLoS ONE">
        <title>The complete multipartite genome sequence of Cupriavidus necator JMP134, a versatile pollutant degrader.</title>
        <authorList>
            <person name="Lykidis A."/>
            <person name="Perez-Pantoja D."/>
            <person name="Ledger T."/>
            <person name="Mavromatis K."/>
            <person name="Anderson I.J."/>
            <person name="Ivanova N.N."/>
            <person name="Hooper S.D."/>
            <person name="Lapidus A."/>
            <person name="Lucas S."/>
            <person name="Gonzalez B."/>
            <person name="Kyrpides N.C."/>
        </authorList>
    </citation>
    <scope>NUCLEOTIDE SEQUENCE [LARGE SCALE GENOMIC DNA]</scope>
    <source>
        <strain>JMP134 / LMG 1197</strain>
    </source>
</reference>
<gene>
    <name evidence="1" type="primary">cheB1</name>
    <name type="ordered locus">Reut_B3648</name>
</gene>
<sequence length="341" mass="35278">MKVGIVNDSALAVAALRRAIALDPAFEIVWVAGDGEQAVQLAASHTPDVILMDLLMPVMDGVEATRRIMAATPCPIVVVTTDLGRNATQVFDAMGHGAIDAVDTPTLTESDAKLTAGPLLRKMRNIGRLVAGRAAPRPAITEMPGTLAASRLVAIGASAGGPAALAKLLGALPADFCAAVVAVQHVDEAFAPGMADWLDSQCALPVRVAAPGETPQAGTVLIAGTNNHLRLLGSNRMAYTEQPSEYLYRPSIDVFFESVVEYWRGQAIGVLLTGMGRDGASGLKAMRDHGCLTIAQDQATSAVYGMPKAAAAMGAASEILPLTAIAPRLVQACCSVRPPPG</sequence>
<organism>
    <name type="scientific">Cupriavidus pinatubonensis (strain JMP 134 / LMG 1197)</name>
    <name type="common">Cupriavidus necator (strain JMP 134)</name>
    <dbReference type="NCBI Taxonomy" id="264198"/>
    <lineage>
        <taxon>Bacteria</taxon>
        <taxon>Pseudomonadati</taxon>
        <taxon>Pseudomonadota</taxon>
        <taxon>Betaproteobacteria</taxon>
        <taxon>Burkholderiales</taxon>
        <taxon>Burkholderiaceae</taxon>
        <taxon>Cupriavidus</taxon>
    </lineage>
</organism>
<name>CHEB1_CUPPJ</name>
<protein>
    <recommendedName>
        <fullName evidence="1">Protein-glutamate methylesterase/protein-glutamine glutaminase 1</fullName>
        <ecNumber evidence="1">3.1.1.61</ecNumber>
        <ecNumber evidence="1">3.5.1.44</ecNumber>
    </recommendedName>
</protein>
<evidence type="ECO:0000255" key="1">
    <source>
        <dbReference type="HAMAP-Rule" id="MF_00099"/>
    </source>
</evidence>
<proteinExistence type="inferred from homology"/>
<feature type="chain" id="PRO_0000225479" description="Protein-glutamate methylesterase/protein-glutamine glutaminase 1">
    <location>
        <begin position="1"/>
        <end position="341"/>
    </location>
</feature>
<feature type="domain" description="Response regulatory" evidence="1">
    <location>
        <begin position="2"/>
        <end position="119"/>
    </location>
</feature>
<feature type="domain" description="CheB-type methylesterase" evidence="1">
    <location>
        <begin position="146"/>
        <end position="331"/>
    </location>
</feature>
<feature type="active site" evidence="1">
    <location>
        <position position="158"/>
    </location>
</feature>
<feature type="active site" evidence="1">
    <location>
        <position position="185"/>
    </location>
</feature>
<feature type="active site" evidence="1">
    <location>
        <position position="278"/>
    </location>
</feature>
<feature type="modified residue" description="4-aspartylphosphate" evidence="1">
    <location>
        <position position="53"/>
    </location>
</feature>
<accession>Q46V28</accession>
<keyword id="KW-0145">Chemotaxis</keyword>
<keyword id="KW-0963">Cytoplasm</keyword>
<keyword id="KW-0378">Hydrolase</keyword>
<keyword id="KW-0597">Phosphoprotein</keyword>
<dbReference type="EC" id="3.1.1.61" evidence="1"/>
<dbReference type="EC" id="3.5.1.44" evidence="1"/>
<dbReference type="EMBL" id="CP000091">
    <property type="protein sequence ID" value="AAZ63006.1"/>
    <property type="molecule type" value="Genomic_DNA"/>
</dbReference>
<dbReference type="SMR" id="Q46V28"/>
<dbReference type="STRING" id="264198.Reut_B3648"/>
<dbReference type="KEGG" id="reu:Reut_B3648"/>
<dbReference type="eggNOG" id="COG2201">
    <property type="taxonomic scope" value="Bacteria"/>
</dbReference>
<dbReference type="HOGENOM" id="CLU_000445_51_0_4"/>
<dbReference type="OrthoDB" id="9793421at2"/>
<dbReference type="GO" id="GO:0005737">
    <property type="term" value="C:cytoplasm"/>
    <property type="evidence" value="ECO:0007669"/>
    <property type="project" value="UniProtKB-SubCell"/>
</dbReference>
<dbReference type="GO" id="GO:0000156">
    <property type="term" value="F:phosphorelay response regulator activity"/>
    <property type="evidence" value="ECO:0007669"/>
    <property type="project" value="InterPro"/>
</dbReference>
<dbReference type="GO" id="GO:0008984">
    <property type="term" value="F:protein-glutamate methylesterase activity"/>
    <property type="evidence" value="ECO:0007669"/>
    <property type="project" value="UniProtKB-UniRule"/>
</dbReference>
<dbReference type="GO" id="GO:0050568">
    <property type="term" value="F:protein-glutamine glutaminase activity"/>
    <property type="evidence" value="ECO:0007669"/>
    <property type="project" value="UniProtKB-UniRule"/>
</dbReference>
<dbReference type="GO" id="GO:0006935">
    <property type="term" value="P:chemotaxis"/>
    <property type="evidence" value="ECO:0007669"/>
    <property type="project" value="UniProtKB-UniRule"/>
</dbReference>
<dbReference type="CDD" id="cd16432">
    <property type="entry name" value="CheB_Rec"/>
    <property type="match status" value="1"/>
</dbReference>
<dbReference type="CDD" id="cd17541">
    <property type="entry name" value="REC_CheB-like"/>
    <property type="match status" value="1"/>
</dbReference>
<dbReference type="Gene3D" id="3.40.50.2300">
    <property type="match status" value="1"/>
</dbReference>
<dbReference type="Gene3D" id="3.40.50.180">
    <property type="entry name" value="Methylesterase CheB, C-terminal domain"/>
    <property type="match status" value="1"/>
</dbReference>
<dbReference type="HAMAP" id="MF_00099">
    <property type="entry name" value="CheB_chemtxs"/>
    <property type="match status" value="1"/>
</dbReference>
<dbReference type="InterPro" id="IPR008248">
    <property type="entry name" value="CheB-like"/>
</dbReference>
<dbReference type="InterPro" id="IPR035909">
    <property type="entry name" value="CheB_C"/>
</dbReference>
<dbReference type="InterPro" id="IPR011006">
    <property type="entry name" value="CheY-like_superfamily"/>
</dbReference>
<dbReference type="InterPro" id="IPR000673">
    <property type="entry name" value="Sig_transdc_resp-reg_Me-estase"/>
</dbReference>
<dbReference type="InterPro" id="IPR001789">
    <property type="entry name" value="Sig_transdc_resp-reg_receiver"/>
</dbReference>
<dbReference type="NCBIfam" id="NF001965">
    <property type="entry name" value="PRK00742.1"/>
    <property type="match status" value="1"/>
</dbReference>
<dbReference type="NCBIfam" id="NF009206">
    <property type="entry name" value="PRK12555.1"/>
    <property type="match status" value="1"/>
</dbReference>
<dbReference type="PANTHER" id="PTHR42872">
    <property type="entry name" value="PROTEIN-GLUTAMATE METHYLESTERASE/PROTEIN-GLUTAMINE GLUTAMINASE"/>
    <property type="match status" value="1"/>
</dbReference>
<dbReference type="PANTHER" id="PTHR42872:SF6">
    <property type="entry name" value="PROTEIN-GLUTAMATE METHYLESTERASE_PROTEIN-GLUTAMINE GLUTAMINASE"/>
    <property type="match status" value="1"/>
</dbReference>
<dbReference type="Pfam" id="PF01339">
    <property type="entry name" value="CheB_methylest"/>
    <property type="match status" value="1"/>
</dbReference>
<dbReference type="Pfam" id="PF00072">
    <property type="entry name" value="Response_reg"/>
    <property type="match status" value="1"/>
</dbReference>
<dbReference type="PIRSF" id="PIRSF000876">
    <property type="entry name" value="RR_chemtxs_CheB"/>
    <property type="match status" value="1"/>
</dbReference>
<dbReference type="SMART" id="SM00448">
    <property type="entry name" value="REC"/>
    <property type="match status" value="1"/>
</dbReference>
<dbReference type="SUPFAM" id="SSF52172">
    <property type="entry name" value="CheY-like"/>
    <property type="match status" value="1"/>
</dbReference>
<dbReference type="SUPFAM" id="SSF52738">
    <property type="entry name" value="Methylesterase CheB, C-terminal domain"/>
    <property type="match status" value="1"/>
</dbReference>
<dbReference type="PROSITE" id="PS50122">
    <property type="entry name" value="CHEB"/>
    <property type="match status" value="1"/>
</dbReference>
<dbReference type="PROSITE" id="PS50110">
    <property type="entry name" value="RESPONSE_REGULATORY"/>
    <property type="match status" value="1"/>
</dbReference>